<protein>
    <recommendedName>
        <fullName evidence="1">Probable inorganic carbon transporter subunit DabA</fullName>
    </recommendedName>
</protein>
<gene>
    <name evidence="1" type="primary">dabA</name>
    <name type="ordered locus">NWMN_0419</name>
</gene>
<proteinExistence type="inferred from homology"/>
<organism>
    <name type="scientific">Staphylococcus aureus (strain Newman)</name>
    <dbReference type="NCBI Taxonomy" id="426430"/>
    <lineage>
        <taxon>Bacteria</taxon>
        <taxon>Bacillati</taxon>
        <taxon>Bacillota</taxon>
        <taxon>Bacilli</taxon>
        <taxon>Bacillales</taxon>
        <taxon>Staphylococcaceae</taxon>
        <taxon>Staphylococcus</taxon>
    </lineage>
</organism>
<keyword id="KW-1003">Cell membrane</keyword>
<keyword id="KW-0472">Membrane</keyword>
<keyword id="KW-0479">Metal-binding</keyword>
<keyword id="KW-0813">Transport</keyword>
<keyword id="KW-0862">Zinc</keyword>
<evidence type="ECO:0000255" key="1">
    <source>
        <dbReference type="HAMAP-Rule" id="MF_01871"/>
    </source>
</evidence>
<dbReference type="EMBL" id="AP009351">
    <property type="protein sequence ID" value="BAF66691.1"/>
    <property type="molecule type" value="Genomic_DNA"/>
</dbReference>
<dbReference type="RefSeq" id="WP_000211540.1">
    <property type="nucleotide sequence ID" value="NZ_JBBIAE010000014.1"/>
</dbReference>
<dbReference type="KEGG" id="sae:NWMN_0419"/>
<dbReference type="HOGENOM" id="CLU_009885_0_0_9"/>
<dbReference type="Proteomes" id="UP000006386">
    <property type="component" value="Chromosome"/>
</dbReference>
<dbReference type="GO" id="GO:0005886">
    <property type="term" value="C:plasma membrane"/>
    <property type="evidence" value="ECO:0007669"/>
    <property type="project" value="UniProtKB-SubCell"/>
</dbReference>
<dbReference type="GO" id="GO:0008270">
    <property type="term" value="F:zinc ion binding"/>
    <property type="evidence" value="ECO:0007669"/>
    <property type="project" value="UniProtKB-UniRule"/>
</dbReference>
<dbReference type="HAMAP" id="MF_01871">
    <property type="entry name" value="DabA"/>
    <property type="match status" value="1"/>
</dbReference>
<dbReference type="InterPro" id="IPR018752">
    <property type="entry name" value="DabA"/>
</dbReference>
<dbReference type="PANTHER" id="PTHR38344:SF1">
    <property type="entry name" value="INORGANIC CARBON TRANSPORTER SUBUNIT DABA-RELATED"/>
    <property type="match status" value="1"/>
</dbReference>
<dbReference type="PANTHER" id="PTHR38344">
    <property type="entry name" value="UPF0753 PROTEIN AQ_863"/>
    <property type="match status" value="1"/>
</dbReference>
<dbReference type="Pfam" id="PF10070">
    <property type="entry name" value="DabA"/>
    <property type="match status" value="1"/>
</dbReference>
<feature type="chain" id="PRO_0000387313" description="Probable inorganic carbon transporter subunit DabA">
    <location>
        <begin position="1"/>
        <end position="901"/>
    </location>
</feature>
<feature type="binding site" evidence="1">
    <location>
        <position position="424"/>
    </location>
    <ligand>
        <name>Zn(2+)</name>
        <dbReference type="ChEBI" id="CHEBI:29105"/>
    </ligand>
</feature>
<feature type="binding site" evidence="1">
    <location>
        <position position="426"/>
    </location>
    <ligand>
        <name>Zn(2+)</name>
        <dbReference type="ChEBI" id="CHEBI:29105"/>
    </ligand>
</feature>
<feature type="binding site" evidence="1">
    <location>
        <position position="606"/>
    </location>
    <ligand>
        <name>Zn(2+)</name>
        <dbReference type="ChEBI" id="CHEBI:29105"/>
    </ligand>
</feature>
<feature type="binding site" evidence="1">
    <location>
        <position position="621"/>
    </location>
    <ligand>
        <name>Zn(2+)</name>
        <dbReference type="ChEBI" id="CHEBI:29105"/>
    </ligand>
</feature>
<reference key="1">
    <citation type="journal article" date="2008" name="J. Bacteriol.">
        <title>Genome sequence of Staphylococcus aureus strain Newman and comparative analysis of staphylococcal genomes: polymorphism and evolution of two major pathogenicity islands.</title>
        <authorList>
            <person name="Baba T."/>
            <person name="Bae T."/>
            <person name="Schneewind O."/>
            <person name="Takeuchi F."/>
            <person name="Hiramatsu K."/>
        </authorList>
    </citation>
    <scope>NUCLEOTIDE SEQUENCE [LARGE SCALE GENOMIC DNA]</scope>
    <source>
        <strain>Newman</strain>
    </source>
</reference>
<name>DABA_STAAE</name>
<sequence length="901" mass="102617">MTTQLNINSVIENAKRVITPLSPISIFAARNPWEGLEADTFEDVAKWLRDVRDVDIFPNKALIESAVARGELDESVFNQLVTDMLLEHHYNIPQHYINLYIDNIKTLKDVPASYMNHSNVDVVADLLLEKSKRDMAESYHHYDVRPMSDAIIDEQGEPLSEQVNRQMIKWTKLYIDQFLSSWTMPKREQSFYHAWLHLAQHDHSFTKAQRQVIKGLPNDPEMTIESVLTHFSIDQEDYQAYVEGHLLALPGWAGMLYYRSQQHHFEQHLLTDYLAIRLVVEQLLVGDEFKSVAKDCESRSENWFKQTVASWCYYSDMPSDVLLQHDVNEIQTFIHFAATMNKNVFKNLWLIAWEMTYESQLKQKIKAGHESVAGALDVNQVNVSENDNANQPHSVLLNDTQAVDENNSELNQMGTSTKAQIAFCIDVRSEPFRRHIEAAGPFETIGIAGFFGLPIQKDAVDEQFKHDSLPVMVPPAYRIKEFADRYDMNVYRQQQQTMSSMFYTFKLMKNNVMPSLLLPELSGPFLSLSTIVNSIMPRKSRASLQKIKQKWLKKPETKLTIDREFDRTSDLPVGFTEQEQIDFALQALKLMDLTEAFAPFVVLAGHASHSHNNPHHASLECGACGGASSGFNAKLLAMICNRPNVRQGLKQSGVYIPETTVFAVAEHHTSTDTLAWVYVPDTLSSIALDAYESLNDAMPMISEHANRERLDKLPTIGRVNHPVEEAQRFASDWSEVRPEWGLAKNASFIIGRRQLTKGIDLEGRTFLHNYDWRKDKDGTLLNTIISGPALVAQWINLQYYASTVAPHFYGSGNKATQTVTSGVGVMQGNASDLMYGLSWQSVMAADRTMYHSPIRLLVVIQAPDYVVARLLANNEHFARKVSNHWLRLMSVNEEGRFKSWI</sequence>
<accession>A6QEA9</accession>
<comment type="function">
    <text evidence="1">Part of an energy-coupled inorganic carbon pump.</text>
</comment>
<comment type="cofactor">
    <cofactor evidence="1">
        <name>Zn(2+)</name>
        <dbReference type="ChEBI" id="CHEBI:29105"/>
    </cofactor>
</comment>
<comment type="subunit">
    <text evidence="1">Forms a complex with DabB.</text>
</comment>
<comment type="subcellular location">
    <subcellularLocation>
        <location evidence="1">Cell membrane</location>
        <topology evidence="1">Peripheral membrane protein</topology>
    </subcellularLocation>
</comment>
<comment type="similarity">
    <text evidence="1">Belongs to the inorganic carbon transporter (TC 9.A.2) DabA family.</text>
</comment>